<proteinExistence type="inferred from homology"/>
<gene>
    <name evidence="1" type="primary">miaA</name>
    <name type="ordered locus">amb3506</name>
</gene>
<name>MIAA_PARM1</name>
<evidence type="ECO:0000255" key="1">
    <source>
        <dbReference type="HAMAP-Rule" id="MF_00185"/>
    </source>
</evidence>
<reference key="1">
    <citation type="journal article" date="2005" name="DNA Res.">
        <title>Complete genome sequence of the facultative anaerobic magnetotactic bacterium Magnetospirillum sp. strain AMB-1.</title>
        <authorList>
            <person name="Matsunaga T."/>
            <person name="Okamura Y."/>
            <person name="Fukuda Y."/>
            <person name="Wahyudi A.T."/>
            <person name="Murase Y."/>
            <person name="Takeyama H."/>
        </authorList>
    </citation>
    <scope>NUCLEOTIDE SEQUENCE [LARGE SCALE GENOMIC DNA]</scope>
    <source>
        <strain>ATCC 700264 / AMB-1</strain>
    </source>
</reference>
<dbReference type="EC" id="2.5.1.75" evidence="1"/>
<dbReference type="EMBL" id="AP007255">
    <property type="protein sequence ID" value="BAE52310.1"/>
    <property type="molecule type" value="Genomic_DNA"/>
</dbReference>
<dbReference type="RefSeq" id="WP_011385866.1">
    <property type="nucleotide sequence ID" value="NC_007626.1"/>
</dbReference>
<dbReference type="SMR" id="Q2W1G5"/>
<dbReference type="STRING" id="342108.amb3506"/>
<dbReference type="KEGG" id="mag:amb3506"/>
<dbReference type="HOGENOM" id="CLU_032616_0_1_5"/>
<dbReference type="OrthoDB" id="9776390at2"/>
<dbReference type="Proteomes" id="UP000007058">
    <property type="component" value="Chromosome"/>
</dbReference>
<dbReference type="GO" id="GO:0005524">
    <property type="term" value="F:ATP binding"/>
    <property type="evidence" value="ECO:0007669"/>
    <property type="project" value="UniProtKB-UniRule"/>
</dbReference>
<dbReference type="GO" id="GO:0052381">
    <property type="term" value="F:tRNA dimethylallyltransferase activity"/>
    <property type="evidence" value="ECO:0007669"/>
    <property type="project" value="UniProtKB-UniRule"/>
</dbReference>
<dbReference type="GO" id="GO:0006400">
    <property type="term" value="P:tRNA modification"/>
    <property type="evidence" value="ECO:0007669"/>
    <property type="project" value="TreeGrafter"/>
</dbReference>
<dbReference type="Gene3D" id="1.10.20.140">
    <property type="match status" value="1"/>
</dbReference>
<dbReference type="Gene3D" id="3.40.50.300">
    <property type="entry name" value="P-loop containing nucleotide triphosphate hydrolases"/>
    <property type="match status" value="1"/>
</dbReference>
<dbReference type="HAMAP" id="MF_00185">
    <property type="entry name" value="IPP_trans"/>
    <property type="match status" value="1"/>
</dbReference>
<dbReference type="InterPro" id="IPR039657">
    <property type="entry name" value="Dimethylallyltransferase"/>
</dbReference>
<dbReference type="InterPro" id="IPR018022">
    <property type="entry name" value="IPT"/>
</dbReference>
<dbReference type="InterPro" id="IPR027417">
    <property type="entry name" value="P-loop_NTPase"/>
</dbReference>
<dbReference type="NCBIfam" id="TIGR00174">
    <property type="entry name" value="miaA"/>
    <property type="match status" value="1"/>
</dbReference>
<dbReference type="PANTHER" id="PTHR11088">
    <property type="entry name" value="TRNA DIMETHYLALLYLTRANSFERASE"/>
    <property type="match status" value="1"/>
</dbReference>
<dbReference type="PANTHER" id="PTHR11088:SF60">
    <property type="entry name" value="TRNA DIMETHYLALLYLTRANSFERASE"/>
    <property type="match status" value="1"/>
</dbReference>
<dbReference type="Pfam" id="PF01715">
    <property type="entry name" value="IPPT"/>
    <property type="match status" value="1"/>
</dbReference>
<dbReference type="SUPFAM" id="SSF52540">
    <property type="entry name" value="P-loop containing nucleoside triphosphate hydrolases"/>
    <property type="match status" value="2"/>
</dbReference>
<accession>Q2W1G5</accession>
<sequence length="315" mass="34187">MTSTSTPAVVIAGPTASGKSGLAVRIAREFGGVVINADSMQVTDALPLLTARPAPGDMALAPHRLYAVLPPTELCSAARWRDMAAMEMAAAWQAGMLPILTGGTGLYLKAVMEGLSPIPEIPESIRAEARTLLAEMGNAAFHNRLAKHDPLMAERLDSGNSQRLARAWEVVTATGRSLAEWQDEPREGAVEARWFSLVLDPERPRLYAQCESRFRAMVTAGALDEVRDFEALRLPPDLPIQKALGRRELAAHLAGETDLDTAIAAACQATRNYAKRQGTWFRHQMMASLTASEQLSESLIATIFLKIRQHLLTAP</sequence>
<organism>
    <name type="scientific">Paramagnetospirillum magneticum (strain ATCC 700264 / AMB-1)</name>
    <name type="common">Magnetospirillum magneticum</name>
    <dbReference type="NCBI Taxonomy" id="342108"/>
    <lineage>
        <taxon>Bacteria</taxon>
        <taxon>Pseudomonadati</taxon>
        <taxon>Pseudomonadota</taxon>
        <taxon>Alphaproteobacteria</taxon>
        <taxon>Rhodospirillales</taxon>
        <taxon>Magnetospirillaceae</taxon>
        <taxon>Paramagnetospirillum</taxon>
    </lineage>
</organism>
<keyword id="KW-0067">ATP-binding</keyword>
<keyword id="KW-0460">Magnesium</keyword>
<keyword id="KW-0547">Nucleotide-binding</keyword>
<keyword id="KW-0808">Transferase</keyword>
<keyword id="KW-0819">tRNA processing</keyword>
<comment type="function">
    <text evidence="1">Catalyzes the transfer of a dimethylallyl group onto the adenine at position 37 in tRNAs that read codons beginning with uridine, leading to the formation of N6-(dimethylallyl)adenosine (i(6)A).</text>
</comment>
<comment type="catalytic activity">
    <reaction evidence="1">
        <text>adenosine(37) in tRNA + dimethylallyl diphosphate = N(6)-dimethylallyladenosine(37) in tRNA + diphosphate</text>
        <dbReference type="Rhea" id="RHEA:26482"/>
        <dbReference type="Rhea" id="RHEA-COMP:10162"/>
        <dbReference type="Rhea" id="RHEA-COMP:10375"/>
        <dbReference type="ChEBI" id="CHEBI:33019"/>
        <dbReference type="ChEBI" id="CHEBI:57623"/>
        <dbReference type="ChEBI" id="CHEBI:74411"/>
        <dbReference type="ChEBI" id="CHEBI:74415"/>
        <dbReference type="EC" id="2.5.1.75"/>
    </reaction>
</comment>
<comment type="cofactor">
    <cofactor evidence="1">
        <name>Mg(2+)</name>
        <dbReference type="ChEBI" id="CHEBI:18420"/>
    </cofactor>
</comment>
<comment type="subunit">
    <text evidence="1">Monomer.</text>
</comment>
<comment type="similarity">
    <text evidence="1">Belongs to the IPP transferase family.</text>
</comment>
<feature type="chain" id="PRO_0000377212" description="tRNA dimethylallyltransferase">
    <location>
        <begin position="1"/>
        <end position="315"/>
    </location>
</feature>
<feature type="region of interest" description="Interaction with substrate tRNA" evidence="1">
    <location>
        <begin position="38"/>
        <end position="41"/>
    </location>
</feature>
<feature type="region of interest" description="Interaction with substrate tRNA" evidence="1">
    <location>
        <begin position="162"/>
        <end position="166"/>
    </location>
</feature>
<feature type="binding site" evidence="1">
    <location>
        <begin position="13"/>
        <end position="20"/>
    </location>
    <ligand>
        <name>ATP</name>
        <dbReference type="ChEBI" id="CHEBI:30616"/>
    </ligand>
</feature>
<feature type="binding site" evidence="1">
    <location>
        <begin position="15"/>
        <end position="20"/>
    </location>
    <ligand>
        <name>substrate</name>
    </ligand>
</feature>
<feature type="site" description="Interaction with substrate tRNA" evidence="1">
    <location>
        <position position="104"/>
    </location>
</feature>
<feature type="site" description="Interaction with substrate tRNA" evidence="1">
    <location>
        <position position="126"/>
    </location>
</feature>
<protein>
    <recommendedName>
        <fullName evidence="1">tRNA dimethylallyltransferase</fullName>
        <ecNumber evidence="1">2.5.1.75</ecNumber>
    </recommendedName>
    <alternativeName>
        <fullName evidence="1">Dimethylallyl diphosphate:tRNA dimethylallyltransferase</fullName>
        <shortName evidence="1">DMAPP:tRNA dimethylallyltransferase</shortName>
        <shortName evidence="1">DMATase</shortName>
    </alternativeName>
    <alternativeName>
        <fullName evidence="1">Isopentenyl-diphosphate:tRNA isopentenyltransferase</fullName>
        <shortName evidence="1">IPP transferase</shortName>
        <shortName evidence="1">IPPT</shortName>
        <shortName evidence="1">IPTase</shortName>
    </alternativeName>
</protein>